<protein>
    <recommendedName>
        <fullName>Transcription initiation factor TFIID subunit 12</fullName>
    </recommendedName>
</protein>
<name>TAF12_DICDI</name>
<evidence type="ECO:0000250" key="1"/>
<evidence type="ECO:0000255" key="2"/>
<evidence type="ECO:0000256" key="3">
    <source>
        <dbReference type="SAM" id="MobiDB-lite"/>
    </source>
</evidence>
<evidence type="ECO:0000305" key="4"/>
<reference key="1">
    <citation type="journal article" date="2002" name="Nature">
        <title>Sequence and analysis of chromosome 2 of Dictyostelium discoideum.</title>
        <authorList>
            <person name="Gloeckner G."/>
            <person name="Eichinger L."/>
            <person name="Szafranski K."/>
            <person name="Pachebat J.A."/>
            <person name="Bankier A.T."/>
            <person name="Dear P.H."/>
            <person name="Lehmann R."/>
            <person name="Baumgart C."/>
            <person name="Parra G."/>
            <person name="Abril J.F."/>
            <person name="Guigo R."/>
            <person name="Kumpf K."/>
            <person name="Tunggal B."/>
            <person name="Cox E.C."/>
            <person name="Quail M.A."/>
            <person name="Platzer M."/>
            <person name="Rosenthal A."/>
            <person name="Noegel A.A."/>
        </authorList>
    </citation>
    <scope>NUCLEOTIDE SEQUENCE [LARGE SCALE GENOMIC DNA]</scope>
    <source>
        <strain>AX4</strain>
    </source>
</reference>
<reference key="2">
    <citation type="journal article" date="2005" name="Nature">
        <title>The genome of the social amoeba Dictyostelium discoideum.</title>
        <authorList>
            <person name="Eichinger L."/>
            <person name="Pachebat J.A."/>
            <person name="Gloeckner G."/>
            <person name="Rajandream M.A."/>
            <person name="Sucgang R."/>
            <person name="Berriman M."/>
            <person name="Song J."/>
            <person name="Olsen R."/>
            <person name="Szafranski K."/>
            <person name="Xu Q."/>
            <person name="Tunggal B."/>
            <person name="Kummerfeld S."/>
            <person name="Madera M."/>
            <person name="Konfortov B.A."/>
            <person name="Rivero F."/>
            <person name="Bankier A.T."/>
            <person name="Lehmann R."/>
            <person name="Hamlin N."/>
            <person name="Davies R."/>
            <person name="Gaudet P."/>
            <person name="Fey P."/>
            <person name="Pilcher K."/>
            <person name="Chen G."/>
            <person name="Saunders D."/>
            <person name="Sodergren E.J."/>
            <person name="Davis P."/>
            <person name="Kerhornou A."/>
            <person name="Nie X."/>
            <person name="Hall N."/>
            <person name="Anjard C."/>
            <person name="Hemphill L."/>
            <person name="Bason N."/>
            <person name="Farbrother P."/>
            <person name="Desany B."/>
            <person name="Just E."/>
            <person name="Morio T."/>
            <person name="Rost R."/>
            <person name="Churcher C.M."/>
            <person name="Cooper J."/>
            <person name="Haydock S."/>
            <person name="van Driessche N."/>
            <person name="Cronin A."/>
            <person name="Goodhead I."/>
            <person name="Muzny D.M."/>
            <person name="Mourier T."/>
            <person name="Pain A."/>
            <person name="Lu M."/>
            <person name="Harper D."/>
            <person name="Lindsay R."/>
            <person name="Hauser H."/>
            <person name="James K.D."/>
            <person name="Quiles M."/>
            <person name="Madan Babu M."/>
            <person name="Saito T."/>
            <person name="Buchrieser C."/>
            <person name="Wardroper A."/>
            <person name="Felder M."/>
            <person name="Thangavelu M."/>
            <person name="Johnson D."/>
            <person name="Knights A."/>
            <person name="Loulseged H."/>
            <person name="Mungall K.L."/>
            <person name="Oliver K."/>
            <person name="Price C."/>
            <person name="Quail M.A."/>
            <person name="Urushihara H."/>
            <person name="Hernandez J."/>
            <person name="Rabbinowitsch E."/>
            <person name="Steffen D."/>
            <person name="Sanders M."/>
            <person name="Ma J."/>
            <person name="Kohara Y."/>
            <person name="Sharp S."/>
            <person name="Simmonds M.N."/>
            <person name="Spiegler S."/>
            <person name="Tivey A."/>
            <person name="Sugano S."/>
            <person name="White B."/>
            <person name="Walker D."/>
            <person name="Woodward J.R."/>
            <person name="Winckler T."/>
            <person name="Tanaka Y."/>
            <person name="Shaulsky G."/>
            <person name="Schleicher M."/>
            <person name="Weinstock G.M."/>
            <person name="Rosenthal A."/>
            <person name="Cox E.C."/>
            <person name="Chisholm R.L."/>
            <person name="Gibbs R.A."/>
            <person name="Loomis W.F."/>
            <person name="Platzer M."/>
            <person name="Kay R.R."/>
            <person name="Williams J.G."/>
            <person name="Dear P.H."/>
            <person name="Noegel A.A."/>
            <person name="Barrell B.G."/>
            <person name="Kuspa A."/>
        </authorList>
    </citation>
    <scope>NUCLEOTIDE SEQUENCE [LARGE SCALE GENOMIC DNA]</scope>
    <source>
        <strain>AX4</strain>
    </source>
</reference>
<comment type="function">
    <text evidence="1">Part of the multimeric TFIID complex that plays a central role in mediating promoter responses to various activators and repressors.</text>
</comment>
<comment type="subcellular location">
    <subcellularLocation>
        <location evidence="1">Nucleus</location>
    </subcellularLocation>
</comment>
<comment type="similarity">
    <text evidence="4">Belongs to the TAF12 family.</text>
</comment>
<proteinExistence type="inferred from homology"/>
<keyword id="KW-0175">Coiled coil</keyword>
<keyword id="KW-0539">Nucleus</keyword>
<keyword id="KW-1185">Reference proteome</keyword>
<keyword id="KW-0804">Transcription</keyword>
<keyword id="KW-0805">Transcription regulation</keyword>
<gene>
    <name type="primary">TAF12</name>
    <name type="ORF">DDB_0231001</name>
</gene>
<organism>
    <name type="scientific">Dictyostelium discoideum</name>
    <name type="common">Social amoeba</name>
    <dbReference type="NCBI Taxonomy" id="44689"/>
    <lineage>
        <taxon>Eukaryota</taxon>
        <taxon>Amoebozoa</taxon>
        <taxon>Evosea</taxon>
        <taxon>Eumycetozoa</taxon>
        <taxon>Dictyostelia</taxon>
        <taxon>Dictyosteliales</taxon>
        <taxon>Dictyosteliaceae</taxon>
        <taxon>Dictyostelium</taxon>
    </lineage>
</organism>
<dbReference type="EMBL" id="AC123513">
    <property type="protein sequence ID" value="AAM44379.1"/>
    <property type="molecule type" value="Genomic_DNA"/>
</dbReference>
<dbReference type="EMBL" id="AAFI02000012">
    <property type="protein sequence ID" value="EAL70241.2"/>
    <property type="molecule type" value="Genomic_DNA"/>
</dbReference>
<dbReference type="RefSeq" id="XP_644047.2">
    <property type="nucleotide sequence ID" value="XM_638955.2"/>
</dbReference>
<dbReference type="SMR" id="Q555L9"/>
<dbReference type="FunCoup" id="Q555L9">
    <property type="interactions" value="127"/>
</dbReference>
<dbReference type="STRING" id="44689.Q555L9"/>
<dbReference type="PaxDb" id="44689-DDB0304680"/>
<dbReference type="EnsemblProtists" id="EAL70241">
    <property type="protein sequence ID" value="EAL70241"/>
    <property type="gene ID" value="DDB_G0274697"/>
</dbReference>
<dbReference type="GeneID" id="8619477"/>
<dbReference type="KEGG" id="ddi:DDB_G0274697"/>
<dbReference type="dictyBase" id="DDB_G0274697">
    <property type="gene designation" value="taf12"/>
</dbReference>
<dbReference type="VEuPathDB" id="AmoebaDB:DDB_G0274697"/>
<dbReference type="eggNOG" id="KOG1142">
    <property type="taxonomic scope" value="Eukaryota"/>
</dbReference>
<dbReference type="HOGENOM" id="CLU_436437_0_0_1"/>
<dbReference type="InParanoid" id="Q555L9"/>
<dbReference type="OMA" id="TKDITTH"/>
<dbReference type="Reactome" id="R-DDI-674695">
    <property type="pathway name" value="RNA Polymerase II Pre-transcription Events"/>
</dbReference>
<dbReference type="Reactome" id="R-DDI-73776">
    <property type="pathway name" value="RNA Polymerase II Promoter Escape"/>
</dbReference>
<dbReference type="Reactome" id="R-DDI-73779">
    <property type="pathway name" value="RNA Polymerase II Transcription Pre-Initiation And Promoter Opening"/>
</dbReference>
<dbReference type="Reactome" id="R-DDI-75953">
    <property type="pathway name" value="RNA Polymerase II Transcription Initiation"/>
</dbReference>
<dbReference type="Reactome" id="R-DDI-76042">
    <property type="pathway name" value="RNA Polymerase II Transcription Initiation And Promoter Clearance"/>
</dbReference>
<dbReference type="PRO" id="PR:Q555L9"/>
<dbReference type="Proteomes" id="UP000002195">
    <property type="component" value="Chromosome 2"/>
</dbReference>
<dbReference type="GO" id="GO:0000124">
    <property type="term" value="C:SAGA complex"/>
    <property type="evidence" value="ECO:0000250"/>
    <property type="project" value="dictyBase"/>
</dbReference>
<dbReference type="GO" id="GO:0005669">
    <property type="term" value="C:transcription factor TFIID complex"/>
    <property type="evidence" value="ECO:0000250"/>
    <property type="project" value="dictyBase"/>
</dbReference>
<dbReference type="GO" id="GO:0003677">
    <property type="term" value="F:DNA binding"/>
    <property type="evidence" value="ECO:0000318"/>
    <property type="project" value="GO_Central"/>
</dbReference>
<dbReference type="GO" id="GO:0046982">
    <property type="term" value="F:protein heterodimerization activity"/>
    <property type="evidence" value="ECO:0007669"/>
    <property type="project" value="InterPro"/>
</dbReference>
<dbReference type="GO" id="GO:0017025">
    <property type="term" value="F:TBP-class protein binding"/>
    <property type="evidence" value="ECO:0000318"/>
    <property type="project" value="GO_Central"/>
</dbReference>
<dbReference type="GO" id="GO:0006325">
    <property type="term" value="P:chromatin organization"/>
    <property type="evidence" value="ECO:0000250"/>
    <property type="project" value="dictyBase"/>
</dbReference>
<dbReference type="GO" id="GO:0051123">
    <property type="term" value="P:RNA polymerase II preinitiation complex assembly"/>
    <property type="evidence" value="ECO:0000318"/>
    <property type="project" value="GO_Central"/>
</dbReference>
<dbReference type="GO" id="GO:0006367">
    <property type="term" value="P:transcription initiation at RNA polymerase II promoter"/>
    <property type="evidence" value="ECO:0000250"/>
    <property type="project" value="dictyBase"/>
</dbReference>
<dbReference type="CDD" id="cd07981">
    <property type="entry name" value="HFD_TAF12"/>
    <property type="match status" value="1"/>
</dbReference>
<dbReference type="FunFam" id="1.10.20.10:FF:000011">
    <property type="entry name" value="Transcription initiation factor TFIID subunit 12"/>
    <property type="match status" value="1"/>
</dbReference>
<dbReference type="Gene3D" id="1.10.20.10">
    <property type="entry name" value="Histone, subunit A"/>
    <property type="match status" value="1"/>
</dbReference>
<dbReference type="InterPro" id="IPR009072">
    <property type="entry name" value="Histone-fold"/>
</dbReference>
<dbReference type="InterPro" id="IPR037794">
    <property type="entry name" value="TAF12"/>
</dbReference>
<dbReference type="InterPro" id="IPR003228">
    <property type="entry name" value="TFIID_TAF12_dom"/>
</dbReference>
<dbReference type="PANTHER" id="PTHR12264">
    <property type="entry name" value="TRANSCRIPTION INITIATION FACTOR TFIID SUBUNIT 12"/>
    <property type="match status" value="1"/>
</dbReference>
<dbReference type="PANTHER" id="PTHR12264:SF21">
    <property type="entry name" value="TRANSCRIPTION INITIATION FACTOR TFIID SUBUNIT 12"/>
    <property type="match status" value="1"/>
</dbReference>
<dbReference type="Pfam" id="PF03847">
    <property type="entry name" value="TFIID_20kDa"/>
    <property type="match status" value="1"/>
</dbReference>
<dbReference type="SUPFAM" id="SSF47113">
    <property type="entry name" value="Histone-fold"/>
    <property type="match status" value="1"/>
</dbReference>
<feature type="chain" id="PRO_0000377433" description="Transcription initiation factor TFIID subunit 12">
    <location>
        <begin position="1"/>
        <end position="627"/>
    </location>
</feature>
<feature type="domain" description="Histone-fold" evidence="4">
    <location>
        <begin position="440"/>
        <end position="511"/>
    </location>
</feature>
<feature type="region of interest" description="Disordered" evidence="3">
    <location>
        <begin position="1"/>
        <end position="39"/>
    </location>
</feature>
<feature type="region of interest" description="Disordered" evidence="3">
    <location>
        <begin position="91"/>
        <end position="184"/>
    </location>
</feature>
<feature type="region of interest" description="Disordered" evidence="3">
    <location>
        <begin position="246"/>
        <end position="439"/>
    </location>
</feature>
<feature type="coiled-coil region" evidence="2">
    <location>
        <begin position="368"/>
        <end position="400"/>
    </location>
</feature>
<feature type="coiled-coil region" evidence="2">
    <location>
        <begin position="547"/>
        <end position="622"/>
    </location>
</feature>
<feature type="compositionally biased region" description="Low complexity" evidence="3">
    <location>
        <begin position="91"/>
        <end position="121"/>
    </location>
</feature>
<feature type="compositionally biased region" description="Polar residues" evidence="3">
    <location>
        <begin position="122"/>
        <end position="139"/>
    </location>
</feature>
<feature type="compositionally biased region" description="Low complexity" evidence="3">
    <location>
        <begin position="140"/>
        <end position="177"/>
    </location>
</feature>
<feature type="compositionally biased region" description="Low complexity" evidence="3">
    <location>
        <begin position="246"/>
        <end position="313"/>
    </location>
</feature>
<feature type="compositionally biased region" description="Polar residues" evidence="3">
    <location>
        <begin position="314"/>
        <end position="325"/>
    </location>
</feature>
<feature type="compositionally biased region" description="Low complexity" evidence="3">
    <location>
        <begin position="335"/>
        <end position="366"/>
    </location>
</feature>
<feature type="compositionally biased region" description="Basic and acidic residues" evidence="3">
    <location>
        <begin position="373"/>
        <end position="402"/>
    </location>
</feature>
<feature type="compositionally biased region" description="Gly residues" evidence="3">
    <location>
        <begin position="404"/>
        <end position="414"/>
    </location>
</feature>
<feature type="compositionally biased region" description="Low complexity" evidence="3">
    <location>
        <begin position="415"/>
        <end position="437"/>
    </location>
</feature>
<accession>Q555L9</accession>
<accession>Q8MP19</accession>
<accession>Q8T176</accession>
<sequence length="627" mass="68718">MSAPQQQHNIQQQNIQQNIQQQQPQQNVQQPQQVIGQPQQQPVYKPVIQINKTLPQQQPQQQIPQQQQIYKQAPQQIYNQISPPIQQNINSPTIVNNTPPTPVVTTPTTTTTTTQSNYSTNRPNININPASPISSTTIASPVTPTVLTSTPPTTITTPTTTTTTSTPTTTSTTVITSGTGQPSLGSIESSIESVLRKNNLVNTTNFSPVQNIGTTTPPPSSTVVGITSPTLTQTTSSPITATSITPTITSIPTTTTTNTTSPMSIGTPSSTTPVVSSVLPTTPTTTSVTAPITTTPPSSSVTTTTTTIPTTTTGSNNSVQITGTNPMVYDSRQMANNSSNITSNPTSTINTPTTTTTTTTATSNSTGTILSKQKKEKEKEKERREREIREKENKDQQDKDKGLNSGGGGGGGIGNNNNPNNSNNPNNSNNPNNPNNIEPEVLGKRKLIELLQQISPNEKMDEDAEDILSVLADDFVESTVAFACTLAKHRNSTTLEVKDLQCHLEKNWNIRVPGFGNVEQYKTFKKPHFPENHKLRVAAMKKSIALTQASSRKQQIREFKEQQKELKEQQQQEELKQQLQQSKKQKLQLQQQQLQQQQQQLQQQQQQQQQQQQQQLQQQQQSPSSKF</sequence>